<accession>A4GCK3</accession>
<reference key="1">
    <citation type="submission" date="2007-03" db="EMBL/GenBank/DDBJ databases">
        <title>The NIAID influenza genome sequencing project.</title>
        <authorList>
            <person name="Ghedin E."/>
            <person name="Spiro D."/>
            <person name="Miller N."/>
            <person name="Zaborsky J."/>
            <person name="Feldblyum T."/>
            <person name="Subbu V."/>
            <person name="Shumway M."/>
            <person name="Sparenborg J."/>
            <person name="Groveman L."/>
            <person name="Halpin R."/>
            <person name="Sitz J."/>
            <person name="Koo H."/>
            <person name="Salzberg S.L."/>
            <person name="Webster R.G."/>
            <person name="Hoffmann E."/>
            <person name="Krauss S."/>
            <person name="Naeve C."/>
            <person name="Bao Y."/>
            <person name="Bolotov P."/>
            <person name="Dernovoy D."/>
            <person name="Kiryutin B."/>
            <person name="Lipman D.J."/>
            <person name="Tatusova T."/>
        </authorList>
    </citation>
    <scope>NUCLEOTIDE SEQUENCE [GENOMIC RNA]</scope>
</reference>
<reference key="2">
    <citation type="submission" date="2007-03" db="EMBL/GenBank/DDBJ databases">
        <authorList>
            <consortium name="The NIAID Influenza Genome Sequencing Consortium"/>
        </authorList>
    </citation>
    <scope>NUCLEOTIDE SEQUENCE [GENOMIC RNA]</scope>
</reference>
<sequence length="237" mass="26820">MDPNTVSSFQVDCFLWHVRKQVADQELGDAPFLDRLRRDQKSLKGRGSTLGLNIETATCVGKQIVERILKEESDEALKMTMASAPASRYLTDMTIEEMSRDWFMLMPKQKVAGPLCVRMDQAIMDKNIILKANFSVIFDRLETLILLRAFTEEGAIVGEISPLPSLPGHTNEDVKNAIGVLIGGLEWNDNTVRVSKTLQRFAWKSSNENGRPPLTPKQKRKMARTIRSEVRRNKMAD</sequence>
<gene>
    <name evidence="1" type="primary">NS</name>
</gene>
<evidence type="ECO:0000255" key="1">
    <source>
        <dbReference type="HAMAP-Rule" id="MF_04066"/>
    </source>
</evidence>
<evidence type="ECO:0000256" key="2">
    <source>
        <dbReference type="SAM" id="MobiDB-lite"/>
    </source>
</evidence>
<proteinExistence type="inferred from homology"/>
<keyword id="KW-0025">Alternative splicing</keyword>
<keyword id="KW-1262">Eukaryotic host gene expression shutoff by virus</keyword>
<keyword id="KW-1035">Host cytoplasm</keyword>
<keyword id="KW-1190">Host gene expression shutoff by virus</keyword>
<keyword id="KW-1192">Host mRNA suppression by virus</keyword>
<keyword id="KW-1048">Host nucleus</keyword>
<keyword id="KW-0945">Host-virus interaction</keyword>
<keyword id="KW-1090">Inhibition of host innate immune response by virus</keyword>
<keyword id="KW-1114">Inhibition of host interferon signaling pathway by virus</keyword>
<keyword id="KW-1102">Inhibition of host PKR by virus</keyword>
<keyword id="KW-1103">Inhibition of host pre-mRNA processing by virus</keyword>
<keyword id="KW-1088">Inhibition of host RIG-I by virus</keyword>
<keyword id="KW-1113">Inhibition of host RLR pathway by virus</keyword>
<keyword id="KW-0922">Interferon antiviral system evasion</keyword>
<keyword id="KW-0694">RNA-binding</keyword>
<keyword id="KW-0832">Ubl conjugation</keyword>
<keyword id="KW-0899">Viral immunoevasion</keyword>
<dbReference type="EMBL" id="CY020457">
    <property type="protein sequence ID" value="ABO38367.1"/>
    <property type="molecule type" value="Viral_cRNA"/>
</dbReference>
<dbReference type="SMR" id="A4GCK3"/>
<dbReference type="Proteomes" id="UP000008580">
    <property type="component" value="Genome"/>
</dbReference>
<dbReference type="GO" id="GO:0030430">
    <property type="term" value="C:host cell cytoplasm"/>
    <property type="evidence" value="ECO:0007669"/>
    <property type="project" value="UniProtKB-SubCell"/>
</dbReference>
<dbReference type="GO" id="GO:0042025">
    <property type="term" value="C:host cell nucleus"/>
    <property type="evidence" value="ECO:0007669"/>
    <property type="project" value="UniProtKB-SubCell"/>
</dbReference>
<dbReference type="GO" id="GO:0030291">
    <property type="term" value="F:protein serine/threonine kinase inhibitor activity"/>
    <property type="evidence" value="ECO:0007669"/>
    <property type="project" value="UniProtKB-KW"/>
</dbReference>
<dbReference type="GO" id="GO:0003723">
    <property type="term" value="F:RNA binding"/>
    <property type="evidence" value="ECO:0007669"/>
    <property type="project" value="UniProtKB-KW"/>
</dbReference>
<dbReference type="GO" id="GO:0039540">
    <property type="term" value="P:symbiont-mediated suppression of host cytoplasmic pattern recognition receptor signaling pathway via inhibition of RIG-I activity"/>
    <property type="evidence" value="ECO:0007669"/>
    <property type="project" value="UniProtKB-KW"/>
</dbReference>
<dbReference type="GO" id="GO:0039657">
    <property type="term" value="P:symbiont-mediated suppression of host gene expression"/>
    <property type="evidence" value="ECO:0007669"/>
    <property type="project" value="UniProtKB-KW"/>
</dbReference>
<dbReference type="GO" id="GO:0039524">
    <property type="term" value="P:symbiont-mediated suppression of host mRNA processing"/>
    <property type="evidence" value="ECO:0007669"/>
    <property type="project" value="UniProtKB-KW"/>
</dbReference>
<dbReference type="GO" id="GO:0039580">
    <property type="term" value="P:symbiont-mediated suppression of host PKR/eIFalpha signaling"/>
    <property type="evidence" value="ECO:0007669"/>
    <property type="project" value="UniProtKB-KW"/>
</dbReference>
<dbReference type="GO" id="GO:0039502">
    <property type="term" value="P:symbiont-mediated suppression of host type I interferon-mediated signaling pathway"/>
    <property type="evidence" value="ECO:0007669"/>
    <property type="project" value="UniProtKB-KW"/>
</dbReference>
<dbReference type="FunFam" id="1.10.287.10:FF:000001">
    <property type="entry name" value="Non-structural protein 1"/>
    <property type="match status" value="1"/>
</dbReference>
<dbReference type="FunFam" id="3.30.420.330:FF:000001">
    <property type="entry name" value="Non-structural protein 1"/>
    <property type="match status" value="1"/>
</dbReference>
<dbReference type="Gene3D" id="3.30.420.330">
    <property type="entry name" value="Influenza virus non-structural protein, effector domain"/>
    <property type="match status" value="1"/>
</dbReference>
<dbReference type="Gene3D" id="1.10.287.10">
    <property type="entry name" value="S15/NS1, RNA-binding"/>
    <property type="match status" value="1"/>
</dbReference>
<dbReference type="HAMAP" id="MF_04066">
    <property type="entry name" value="INFV_NS1"/>
    <property type="match status" value="1"/>
</dbReference>
<dbReference type="InterPro" id="IPR004208">
    <property type="entry name" value="NS1"/>
</dbReference>
<dbReference type="InterPro" id="IPR000256">
    <property type="entry name" value="NS1A"/>
</dbReference>
<dbReference type="InterPro" id="IPR038064">
    <property type="entry name" value="NS1A_effect_dom-like_sf"/>
</dbReference>
<dbReference type="InterPro" id="IPR009068">
    <property type="entry name" value="uS15_NS1_RNA-bd_sf"/>
</dbReference>
<dbReference type="Pfam" id="PF00600">
    <property type="entry name" value="Flu_NS1"/>
    <property type="match status" value="1"/>
</dbReference>
<dbReference type="SUPFAM" id="SSF143021">
    <property type="entry name" value="Ns1 effector domain-like"/>
    <property type="match status" value="1"/>
</dbReference>
<dbReference type="SUPFAM" id="SSF47060">
    <property type="entry name" value="S15/NS1 RNA-binding domain"/>
    <property type="match status" value="1"/>
</dbReference>
<feature type="chain" id="PRO_0000372990" description="Non-structural protein 1">
    <location>
        <begin position="1"/>
        <end position="237"/>
    </location>
</feature>
<feature type="region of interest" description="RNA-binding and homodimerization" evidence="1">
    <location>
        <begin position="1"/>
        <end position="73"/>
    </location>
</feature>
<feature type="region of interest" description="CPSF4-binding" evidence="1">
    <location>
        <begin position="180"/>
        <end position="215"/>
    </location>
</feature>
<feature type="region of interest" description="Disordered" evidence="2">
    <location>
        <begin position="205"/>
        <end position="237"/>
    </location>
</feature>
<feature type="region of interest" description="PABPN1-binding" evidence="1">
    <location>
        <begin position="223"/>
        <end position="230"/>
    </location>
</feature>
<feature type="short sequence motif" description="Nuclear localization signal" evidence="1">
    <location>
        <begin position="34"/>
        <end position="38"/>
    </location>
</feature>
<feature type="short sequence motif" description="Nuclear export signal" evidence="1">
    <location>
        <begin position="137"/>
        <end position="146"/>
    </location>
</feature>
<feature type="compositionally biased region" description="Basic and acidic residues" evidence="2">
    <location>
        <begin position="226"/>
        <end position="237"/>
    </location>
</feature>
<protein>
    <recommendedName>
        <fullName evidence="1">Non-structural protein 1</fullName>
        <shortName evidence="1">NS1</shortName>
    </recommendedName>
    <alternativeName>
        <fullName evidence="1">NS1A</fullName>
    </alternativeName>
</protein>
<name>NS1_I80AA</name>
<organismHost>
    <name type="scientific">Aves</name>
    <dbReference type="NCBI Taxonomy" id="8782"/>
</organismHost>
<organismHost>
    <name type="scientific">Homo sapiens</name>
    <name type="common">Human</name>
    <dbReference type="NCBI Taxonomy" id="9606"/>
</organismHost>
<organismHost>
    <name type="scientific">Sus scrofa</name>
    <name type="common">Pig</name>
    <dbReference type="NCBI Taxonomy" id="9823"/>
</organismHost>
<comment type="function">
    <text evidence="1">Inhibits post-transcriptional processing of cellular pre-mRNA, by binding and inhibiting two cellular proteins that are required for the 3'-end processing of cellular pre-mRNAs: the 30 kDa cleavage and polyadenylation specificity factor/CPSF4 and the poly(A)-binding protein 2/PABPN1. In turn, unprocessed 3' end pre-mRNAs accumulate in the host nucleus and are no longer exported to the cytoplasm. Cellular protein synthesis is thereby shut off very early after virus infection. Viral protein synthesis is not affected by the inhibition of the cellular 3' end processing machinery because the poly(A) tails of viral mRNAs are produced by the viral polymerase through a stuttering mechanism. Prevents the establishment of the cellular antiviral state by inhibiting TRIM25-mediated RIGI ubiquitination, which normally triggers the antiviral transduction signal that leads to the activation of type I IFN genes by transcription factors IRF3 and IRF7. Also binds poly(A) and U6 snRNA. Inhibits the integrated stress response (ISR) in the infected cell by blocking dsRNA binding by EIF2AK2/PKR and further phosphorylation of EIF2S1/EIF-2ALPHA. Stress granule formation is thus inhibited, which allows protein synthesis and viral replication.</text>
</comment>
<comment type="subunit">
    <text evidence="1">Homodimer. Interacts with host TRIM25 (via coiled coil); this interaction specifically inhibits TRIM25 multimerization and TRIM25-mediated RIGI CARD ubiquitination. Interacts with human EIF2AK2/PKR, CPSF4, IVNS1ABP and PABPN1.</text>
</comment>
<comment type="subcellular location">
    <subcellularLocation>
        <location evidence="1">Host nucleus</location>
    </subcellularLocation>
    <subcellularLocation>
        <location evidence="1">Host cytoplasm</location>
    </subcellularLocation>
    <text evidence="1">In uninfected, transfected cells, NS1 is localized in the nucleus. Only in virus infected cells, the nuclear export signal is unveiled, presumably by a viral protein, and a fraction of NS1 is exported in the cytoplasm.</text>
</comment>
<comment type="alternative products">
    <event type="alternative splicing"/>
    <isoform>
        <id>A4GCK3-1</id>
        <name>NS1</name>
        <sequence type="displayed"/>
    </isoform>
    <isoform>
        <id>A4GCK2-1</id>
        <name>NEP</name>
        <name>NS2</name>
        <sequence type="external"/>
    </isoform>
</comment>
<comment type="domain">
    <text evidence="1">The dsRNA-binding region is required for suppression of RNA silencing.</text>
</comment>
<comment type="PTM">
    <text evidence="1">Upon interferon induction, ISGylated via host HERC5; this results in the impairment of NS1 interaction with RNA targets due to its inability to form homodimers and to interact with host EIF2AK2/PKR.</text>
</comment>
<comment type="similarity">
    <text evidence="1">Belongs to the influenza A viruses NS1 family.</text>
</comment>
<organism>
    <name type="scientific">Influenza A virus (strain A/India/6263/1980 H1N1)</name>
    <dbReference type="NCBI Taxonomy" id="393562"/>
    <lineage>
        <taxon>Viruses</taxon>
        <taxon>Riboviria</taxon>
        <taxon>Orthornavirae</taxon>
        <taxon>Negarnaviricota</taxon>
        <taxon>Polyploviricotina</taxon>
        <taxon>Insthoviricetes</taxon>
        <taxon>Articulavirales</taxon>
        <taxon>Orthomyxoviridae</taxon>
        <taxon>Alphainfluenzavirus</taxon>
        <taxon>Alphainfluenzavirus influenzae</taxon>
        <taxon>Influenza A virus</taxon>
    </lineage>
</organism>